<sequence length="300" mass="30858">MTTVGFDVAARLGTLLTAMVTPFSGDGSLDTATAARLANHLVDQGCDGLVVSGTTGESPTTTDGEKIELLRAVLEAVGDRARVIAGAGTYDTAHSIRLAKACAAEGAHGLLVVTPYYSKPPQRGLQAHFTAVADATELPMLLYDIPGRSAVPIEPDTIRALASHPNIVGVKDAKADLHSGAQIMADTGLAYYSGDDALNLPWLAMGATGFISVIAHLAAGQLRELLSAFGSGDIATARKINIAVAPLCNAMSRLGGVTLSKAGLRLQGIDVGDPRLPQVAATPEQIDALAADMRAASVLR</sequence>
<accession>P9WP24</accession>
<accession>L0TDG5</accession>
<accession>O33295</accession>
<accession>P63945</accession>
<gene>
    <name evidence="2" type="primary">dapA</name>
    <name type="ordered locus">MT2823</name>
</gene>
<name>DAPA_MYCTO</name>
<protein>
    <recommendedName>
        <fullName evidence="2">4-hydroxy-tetrahydrodipicolinate synthase</fullName>
        <shortName evidence="2">HTPA synthase</shortName>
        <ecNumber evidence="2">4.3.3.7</ecNumber>
    </recommendedName>
</protein>
<dbReference type="EC" id="4.3.3.7" evidence="2"/>
<dbReference type="EMBL" id="AE000516">
    <property type="protein sequence ID" value="AAK47142.1"/>
    <property type="molecule type" value="Genomic_DNA"/>
</dbReference>
<dbReference type="PIR" id="H70879">
    <property type="entry name" value="H70879"/>
</dbReference>
<dbReference type="RefSeq" id="WP_003900564.1">
    <property type="nucleotide sequence ID" value="NZ_KK341227.1"/>
</dbReference>
<dbReference type="SMR" id="P9WP24"/>
<dbReference type="GeneID" id="45426740"/>
<dbReference type="KEGG" id="mtc:MT2823"/>
<dbReference type="PATRIC" id="fig|83331.31.peg.3044"/>
<dbReference type="HOGENOM" id="CLU_049343_7_1_11"/>
<dbReference type="UniPathway" id="UPA00034">
    <property type="reaction ID" value="UER00017"/>
</dbReference>
<dbReference type="Proteomes" id="UP000001020">
    <property type="component" value="Chromosome"/>
</dbReference>
<dbReference type="GO" id="GO:0005829">
    <property type="term" value="C:cytosol"/>
    <property type="evidence" value="ECO:0007669"/>
    <property type="project" value="TreeGrafter"/>
</dbReference>
<dbReference type="GO" id="GO:0008840">
    <property type="term" value="F:4-hydroxy-tetrahydrodipicolinate synthase activity"/>
    <property type="evidence" value="ECO:0007669"/>
    <property type="project" value="UniProtKB-UniRule"/>
</dbReference>
<dbReference type="GO" id="GO:0019877">
    <property type="term" value="P:diaminopimelate biosynthetic process"/>
    <property type="evidence" value="ECO:0007669"/>
    <property type="project" value="UniProtKB-UniRule"/>
</dbReference>
<dbReference type="GO" id="GO:0009089">
    <property type="term" value="P:lysine biosynthetic process via diaminopimelate"/>
    <property type="evidence" value="ECO:0007669"/>
    <property type="project" value="UniProtKB-UniRule"/>
</dbReference>
<dbReference type="CDD" id="cd00950">
    <property type="entry name" value="DHDPS"/>
    <property type="match status" value="1"/>
</dbReference>
<dbReference type="FunFam" id="3.20.20.70:FF:000273">
    <property type="entry name" value="4-hydroxy-tetrahydrodipicolinate synthase"/>
    <property type="match status" value="1"/>
</dbReference>
<dbReference type="Gene3D" id="3.20.20.70">
    <property type="entry name" value="Aldolase class I"/>
    <property type="match status" value="1"/>
</dbReference>
<dbReference type="HAMAP" id="MF_00418">
    <property type="entry name" value="DapA"/>
    <property type="match status" value="1"/>
</dbReference>
<dbReference type="InterPro" id="IPR013785">
    <property type="entry name" value="Aldolase_TIM"/>
</dbReference>
<dbReference type="InterPro" id="IPR005263">
    <property type="entry name" value="DapA"/>
</dbReference>
<dbReference type="InterPro" id="IPR002220">
    <property type="entry name" value="DapA-like"/>
</dbReference>
<dbReference type="InterPro" id="IPR020625">
    <property type="entry name" value="Schiff_base-form_aldolases_AS"/>
</dbReference>
<dbReference type="InterPro" id="IPR020624">
    <property type="entry name" value="Schiff_base-form_aldolases_CS"/>
</dbReference>
<dbReference type="NCBIfam" id="TIGR00674">
    <property type="entry name" value="dapA"/>
    <property type="match status" value="1"/>
</dbReference>
<dbReference type="PANTHER" id="PTHR12128:SF66">
    <property type="entry name" value="4-HYDROXY-2-OXOGLUTARATE ALDOLASE, MITOCHONDRIAL"/>
    <property type="match status" value="1"/>
</dbReference>
<dbReference type="PANTHER" id="PTHR12128">
    <property type="entry name" value="DIHYDRODIPICOLINATE SYNTHASE"/>
    <property type="match status" value="1"/>
</dbReference>
<dbReference type="Pfam" id="PF00701">
    <property type="entry name" value="DHDPS"/>
    <property type="match status" value="1"/>
</dbReference>
<dbReference type="PIRSF" id="PIRSF001365">
    <property type="entry name" value="DHDPS"/>
    <property type="match status" value="1"/>
</dbReference>
<dbReference type="PRINTS" id="PR00146">
    <property type="entry name" value="DHPICSNTHASE"/>
</dbReference>
<dbReference type="SMART" id="SM01130">
    <property type="entry name" value="DHDPS"/>
    <property type="match status" value="1"/>
</dbReference>
<dbReference type="SUPFAM" id="SSF51569">
    <property type="entry name" value="Aldolase"/>
    <property type="match status" value="1"/>
</dbReference>
<dbReference type="PROSITE" id="PS00665">
    <property type="entry name" value="DHDPS_1"/>
    <property type="match status" value="1"/>
</dbReference>
<dbReference type="PROSITE" id="PS00666">
    <property type="entry name" value="DHDPS_2"/>
    <property type="match status" value="1"/>
</dbReference>
<evidence type="ECO:0000250" key="1"/>
<evidence type="ECO:0000255" key="2">
    <source>
        <dbReference type="HAMAP-Rule" id="MF_00418"/>
    </source>
</evidence>
<reference key="1">
    <citation type="journal article" date="2002" name="J. Bacteriol.">
        <title>Whole-genome comparison of Mycobacterium tuberculosis clinical and laboratory strains.</title>
        <authorList>
            <person name="Fleischmann R.D."/>
            <person name="Alland D."/>
            <person name="Eisen J.A."/>
            <person name="Carpenter L."/>
            <person name="White O."/>
            <person name="Peterson J.D."/>
            <person name="DeBoy R.T."/>
            <person name="Dodson R.J."/>
            <person name="Gwinn M.L."/>
            <person name="Haft D.H."/>
            <person name="Hickey E.K."/>
            <person name="Kolonay J.F."/>
            <person name="Nelson W.C."/>
            <person name="Umayam L.A."/>
            <person name="Ermolaeva M.D."/>
            <person name="Salzberg S.L."/>
            <person name="Delcher A."/>
            <person name="Utterback T.R."/>
            <person name="Weidman J.F."/>
            <person name="Khouri H.M."/>
            <person name="Gill J."/>
            <person name="Mikula A."/>
            <person name="Bishai W."/>
            <person name="Jacobs W.R. Jr."/>
            <person name="Venter J.C."/>
            <person name="Fraser C.M."/>
        </authorList>
    </citation>
    <scope>NUCLEOTIDE SEQUENCE [LARGE SCALE GENOMIC DNA]</scope>
    <source>
        <strain>CDC 1551 / Oshkosh</strain>
    </source>
</reference>
<comment type="function">
    <text evidence="2">Catalyzes the condensation of (S)-aspartate-beta-semialdehyde [(S)-ASA] and pyruvate to 4-hydroxy-tetrahydrodipicolinate (HTPA).</text>
</comment>
<comment type="catalytic activity">
    <reaction evidence="2">
        <text>L-aspartate 4-semialdehyde + pyruvate = (2S,4S)-4-hydroxy-2,3,4,5-tetrahydrodipicolinate + H2O + H(+)</text>
        <dbReference type="Rhea" id="RHEA:34171"/>
        <dbReference type="ChEBI" id="CHEBI:15361"/>
        <dbReference type="ChEBI" id="CHEBI:15377"/>
        <dbReference type="ChEBI" id="CHEBI:15378"/>
        <dbReference type="ChEBI" id="CHEBI:67139"/>
        <dbReference type="ChEBI" id="CHEBI:537519"/>
        <dbReference type="EC" id="4.3.3.7"/>
    </reaction>
</comment>
<comment type="pathway">
    <text evidence="2">Amino-acid biosynthesis; L-lysine biosynthesis via DAP pathway; (S)-tetrahydrodipicolinate from L-aspartate: step 3/4.</text>
</comment>
<comment type="subunit">
    <text evidence="1">Homotetramer.</text>
</comment>
<comment type="subcellular location">
    <subcellularLocation>
        <location evidence="2">Cytoplasm</location>
    </subcellularLocation>
</comment>
<comment type="similarity">
    <text evidence="2">Belongs to the DapA family.</text>
</comment>
<keyword id="KW-0028">Amino-acid biosynthesis</keyword>
<keyword id="KW-0963">Cytoplasm</keyword>
<keyword id="KW-0220">Diaminopimelate biosynthesis</keyword>
<keyword id="KW-0456">Lyase</keyword>
<keyword id="KW-0457">Lysine biosynthesis</keyword>
<keyword id="KW-1185">Reference proteome</keyword>
<keyword id="KW-0704">Schiff base</keyword>
<organism>
    <name type="scientific">Mycobacterium tuberculosis (strain CDC 1551 / Oshkosh)</name>
    <dbReference type="NCBI Taxonomy" id="83331"/>
    <lineage>
        <taxon>Bacteria</taxon>
        <taxon>Bacillati</taxon>
        <taxon>Actinomycetota</taxon>
        <taxon>Actinomycetes</taxon>
        <taxon>Mycobacteriales</taxon>
        <taxon>Mycobacteriaceae</taxon>
        <taxon>Mycobacterium</taxon>
        <taxon>Mycobacterium tuberculosis complex</taxon>
    </lineage>
</organism>
<proteinExistence type="inferred from homology"/>
<feature type="chain" id="PRO_0000427026" description="4-hydroxy-tetrahydrodipicolinate synthase">
    <location>
        <begin position="1"/>
        <end position="300"/>
    </location>
</feature>
<feature type="active site" description="Proton donor/acceptor" evidence="2">
    <location>
        <position position="143"/>
    </location>
</feature>
<feature type="active site" description="Schiff-base intermediate with substrate" evidence="2">
    <location>
        <position position="171"/>
    </location>
</feature>
<feature type="binding site" evidence="2">
    <location>
        <position position="55"/>
    </location>
    <ligand>
        <name>pyruvate</name>
        <dbReference type="ChEBI" id="CHEBI:15361"/>
    </ligand>
</feature>
<feature type="binding site" evidence="2">
    <location>
        <position position="211"/>
    </location>
    <ligand>
        <name>pyruvate</name>
        <dbReference type="ChEBI" id="CHEBI:15361"/>
    </ligand>
</feature>
<feature type="site" description="Part of a proton relay during catalysis" evidence="2">
    <location>
        <position position="54"/>
    </location>
</feature>
<feature type="site" description="Part of a proton relay during catalysis" evidence="2">
    <location>
        <position position="117"/>
    </location>
</feature>